<feature type="initiator methionine" description="Removed" evidence="3">
    <location>
        <position position="1"/>
    </location>
</feature>
<feature type="chain" id="PRO_0000185756" description="UTP--glucose-1-phosphate uridylyltransferase 1">
    <location>
        <begin position="2"/>
        <end position="470"/>
    </location>
</feature>
<feature type="binding site" evidence="3">
    <location>
        <begin position="86"/>
        <end position="89"/>
    </location>
    <ligand>
        <name>UTP</name>
        <dbReference type="ChEBI" id="CHEBI:46398"/>
    </ligand>
</feature>
<feature type="binding site" evidence="2">
    <location>
        <begin position="88"/>
        <end position="89"/>
    </location>
    <ligand>
        <name>substrate</name>
    </ligand>
</feature>
<feature type="binding site" evidence="3">
    <location>
        <position position="100"/>
    </location>
    <ligand>
        <name>UTP</name>
        <dbReference type="ChEBI" id="CHEBI:46398"/>
    </ligand>
</feature>
<feature type="binding site" evidence="3">
    <location>
        <position position="163"/>
    </location>
    <ligand>
        <name>UTP</name>
        <dbReference type="ChEBI" id="CHEBI:46398"/>
    </ligand>
</feature>
<feature type="binding site" evidence="3">
    <location>
        <position position="192"/>
    </location>
    <ligand>
        <name>UTP</name>
        <dbReference type="ChEBI" id="CHEBI:46398"/>
    </ligand>
</feature>
<feature type="binding site" evidence="2">
    <location>
        <position position="193"/>
    </location>
    <ligand>
        <name>substrate</name>
    </ligand>
</feature>
<feature type="binding site" evidence="2">
    <location>
        <begin position="221"/>
        <end position="223"/>
    </location>
    <ligand>
        <name>substrate</name>
    </ligand>
</feature>
<feature type="binding site" evidence="3">
    <location>
        <position position="223"/>
    </location>
    <ligand>
        <name>UTP</name>
        <dbReference type="ChEBI" id="CHEBI:46398"/>
    </ligand>
</feature>
<feature type="binding site" evidence="3">
    <location>
        <position position="361"/>
    </location>
    <ligand>
        <name>UTP</name>
        <dbReference type="ChEBI" id="CHEBI:46398"/>
    </ligand>
</feature>
<feature type="modified residue" description="N-acetylalanine" evidence="3">
    <location>
        <position position="2"/>
    </location>
</feature>
<protein>
    <recommendedName>
        <fullName>UTP--glucose-1-phosphate uridylyltransferase 1</fullName>
        <ecNumber>2.7.7.9</ecNumber>
    </recommendedName>
    <alternativeName>
        <fullName>UDP-glucose pyrophosphorylase 1</fullName>
        <shortName evidence="8">AtUGP1</shortName>
        <shortName>UDPGP 1</shortName>
        <shortName>UGPase 1</shortName>
    </alternativeName>
</protein>
<proteinExistence type="evidence at transcript level"/>
<accession>P57751</accession>
<accession>Q3E9G5</accession>
<comment type="function">
    <text evidence="4 5 6">Converts glucose 1-phosphate to UDP-glucose, which is the major glycosyl donor for polysaccharides. Acts redundantly with UGP2 and is essential for the synthesis of sucrose, starch and cell wall, and callose deposition (PubMed:19366709, PubMed:20435647). Involved in the regulation of the programmed cell death (PCD) induced by the fungal toxin fumonisin B1 (FB1) (PubMed:23438466).</text>
</comment>
<comment type="catalytic activity">
    <reaction>
        <text>alpha-D-glucose 1-phosphate + UTP + H(+) = UDP-alpha-D-glucose + diphosphate</text>
        <dbReference type="Rhea" id="RHEA:19889"/>
        <dbReference type="ChEBI" id="CHEBI:15378"/>
        <dbReference type="ChEBI" id="CHEBI:33019"/>
        <dbReference type="ChEBI" id="CHEBI:46398"/>
        <dbReference type="ChEBI" id="CHEBI:58601"/>
        <dbReference type="ChEBI" id="CHEBI:58885"/>
        <dbReference type="EC" id="2.7.7.9"/>
    </reaction>
</comment>
<comment type="subcellular location">
    <subcellularLocation>
        <location evidence="1">Cytoplasm</location>
    </subcellularLocation>
</comment>
<comment type="alternative products">
    <event type="alternative splicing"/>
    <isoform>
        <id>P57751-1</id>
        <name>1</name>
        <sequence type="displayed"/>
    </isoform>
    <text>A number of isoforms are produced. According to EST sequences.</text>
</comment>
<comment type="tissue specificity">
    <text evidence="4">Expressed in roots, rosette leaves, cauline leaves, stems, flowers and siliques.</text>
</comment>
<comment type="induction">
    <text evidence="4">By sucrose.</text>
</comment>
<comment type="disruption phenotype">
    <text evidence="4 5">Reduced number of seeds (PubMed:19366709). The double mutants upg1 and ugp2 display severe growth defects and male sterility due to the absence of callose deposition around microspores (PubMed:20435647).</text>
</comment>
<comment type="similarity">
    <text evidence="9">Belongs to the UDPGP type 1 family.</text>
</comment>
<sequence>MAATATEKLPQLKSAVDGLTEMSENEKSGFINLVSRYLSGEAQHIEWSKIQTPTDEIVVPYDKMANVSEDASETKYLLDKLVVLKLNGGLGTTMGCTGPKSVIEVRDGLTFLDLIVIQIENLNNKYNCKVPLVLMNSFNTHDDTQKIVEKYTKSNVDIHTFNQSKYPRVVADEFVPWPSKGKTDKDGWYPPGHGDVFPSLMNSGKLDAFLSQGKEYVFIANSDNLGAIVDLKILKHLIQNKNEYCMEVTPKTLADVKGGTLISYEGKVQLLEIAQVPDEHVNEFKSIEKFKIFNTNNLWVNLKAIKKLVEADALKMEIIPNPKEVDGVKVLQLETAAGAAIRFFDNAIGVNVPRSRFLPVKATSDLLLVQSDLYTLVDGFVTRNKARTNPTNPAIELGPEFKKVASFLSRFKSIPSIVELDSLKVSGDVWFGSGVVLKGKVTVKANAGTKLEIPDNAVLENKDINGPEDL</sequence>
<dbReference type="EC" id="2.7.7.9"/>
<dbReference type="EMBL" id="AB005238">
    <property type="protein sequence ID" value="BAB10518.1"/>
    <property type="molecule type" value="Genomic_DNA"/>
</dbReference>
<dbReference type="EMBL" id="CP002688">
    <property type="protein sequence ID" value="AED92412.1"/>
    <property type="molecule type" value="Genomic_DNA"/>
</dbReference>
<dbReference type="EMBL" id="AF360244">
    <property type="protein sequence ID" value="AAK25954.1"/>
    <property type="molecule type" value="mRNA"/>
</dbReference>
<dbReference type="EMBL" id="AY040042">
    <property type="protein sequence ID" value="AAK64100.1"/>
    <property type="molecule type" value="mRNA"/>
</dbReference>
<dbReference type="EMBL" id="AF361816">
    <property type="protein sequence ID" value="AAK32829.1"/>
    <property type="molecule type" value="mRNA"/>
</dbReference>
<dbReference type="RefSeq" id="NP_197233.1">
    <molecule id="P57751-1"/>
    <property type="nucleotide sequence ID" value="NM_121737.4"/>
</dbReference>
<dbReference type="SMR" id="P57751"/>
<dbReference type="BioGRID" id="16872">
    <property type="interactions" value="16"/>
</dbReference>
<dbReference type="FunCoup" id="P57751">
    <property type="interactions" value="3003"/>
</dbReference>
<dbReference type="IntAct" id="P57751">
    <property type="interactions" value="1"/>
</dbReference>
<dbReference type="STRING" id="3702.P57751"/>
<dbReference type="iPTMnet" id="P57751"/>
<dbReference type="PaxDb" id="3702-AT5G17310.2"/>
<dbReference type="ProteomicsDB" id="245265">
    <molecule id="P57751-1"/>
</dbReference>
<dbReference type="EnsemblPlants" id="AT5G17310.2">
    <molecule id="P57751-1"/>
    <property type="protein sequence ID" value="AT5G17310.2"/>
    <property type="gene ID" value="AT5G17310"/>
</dbReference>
<dbReference type="Gramene" id="AT5G17310.2">
    <molecule id="P57751-1"/>
    <property type="protein sequence ID" value="AT5G17310.2"/>
    <property type="gene ID" value="AT5G17310"/>
</dbReference>
<dbReference type="KEGG" id="ath:AT5G17310"/>
<dbReference type="Araport" id="AT5G17310"/>
<dbReference type="TAIR" id="AT5G17310">
    <property type="gene designation" value="UGP2"/>
</dbReference>
<dbReference type="eggNOG" id="KOG2638">
    <property type="taxonomic scope" value="Eukaryota"/>
</dbReference>
<dbReference type="InParanoid" id="P57751"/>
<dbReference type="OMA" id="KEYCFLS"/>
<dbReference type="PhylomeDB" id="P57751"/>
<dbReference type="BioCyc" id="ARA:AT5G17310-MONOMER"/>
<dbReference type="BRENDA" id="2.7.7.9">
    <property type="organism ID" value="399"/>
</dbReference>
<dbReference type="PRO" id="PR:P57751"/>
<dbReference type="Proteomes" id="UP000006548">
    <property type="component" value="Chromosome 5"/>
</dbReference>
<dbReference type="ExpressionAtlas" id="P57751">
    <property type="expression patterns" value="baseline and differential"/>
</dbReference>
<dbReference type="GO" id="GO:0005829">
    <property type="term" value="C:cytosol"/>
    <property type="evidence" value="ECO:0007005"/>
    <property type="project" value="TAIR"/>
</dbReference>
<dbReference type="GO" id="GO:0005886">
    <property type="term" value="C:plasma membrane"/>
    <property type="evidence" value="ECO:0007005"/>
    <property type="project" value="TAIR"/>
</dbReference>
<dbReference type="GO" id="GO:0009536">
    <property type="term" value="C:plastid"/>
    <property type="evidence" value="ECO:0007005"/>
    <property type="project" value="TAIR"/>
</dbReference>
<dbReference type="GO" id="GO:0003983">
    <property type="term" value="F:UTP:glucose-1-phosphate uridylyltransferase activity"/>
    <property type="evidence" value="ECO:0007669"/>
    <property type="project" value="UniProtKB-EC"/>
</dbReference>
<dbReference type="GO" id="GO:0052543">
    <property type="term" value="P:callose deposition in cell wall"/>
    <property type="evidence" value="ECO:0000316"/>
    <property type="project" value="TAIR"/>
</dbReference>
<dbReference type="GO" id="GO:0009555">
    <property type="term" value="P:pollen development"/>
    <property type="evidence" value="ECO:0000316"/>
    <property type="project" value="TAIR"/>
</dbReference>
<dbReference type="GO" id="GO:0006011">
    <property type="term" value="P:UDP-alpha-D-glucose metabolic process"/>
    <property type="evidence" value="ECO:0007669"/>
    <property type="project" value="InterPro"/>
</dbReference>
<dbReference type="CDD" id="cd00897">
    <property type="entry name" value="UGPase_euk"/>
    <property type="match status" value="1"/>
</dbReference>
<dbReference type="FunFam" id="2.160.10.10:FF:000001">
    <property type="entry name" value="UTP--glucose-1-phosphate uridylyltransferase"/>
    <property type="match status" value="1"/>
</dbReference>
<dbReference type="FunFam" id="3.90.550.10:FF:000073">
    <property type="entry name" value="UTP--glucose-1-phosphate uridylyltransferase"/>
    <property type="match status" value="1"/>
</dbReference>
<dbReference type="Gene3D" id="2.160.10.10">
    <property type="entry name" value="Hexapeptide repeat proteins"/>
    <property type="match status" value="1"/>
</dbReference>
<dbReference type="Gene3D" id="3.90.550.10">
    <property type="entry name" value="Spore Coat Polysaccharide Biosynthesis Protein SpsA, Chain A"/>
    <property type="match status" value="1"/>
</dbReference>
<dbReference type="InterPro" id="IPR029044">
    <property type="entry name" value="Nucleotide-diphossugar_trans"/>
</dbReference>
<dbReference type="InterPro" id="IPR002618">
    <property type="entry name" value="UDPGP_fam"/>
</dbReference>
<dbReference type="InterPro" id="IPR016267">
    <property type="entry name" value="UDPGP_trans"/>
</dbReference>
<dbReference type="PANTHER" id="PTHR43511">
    <property type="match status" value="1"/>
</dbReference>
<dbReference type="Pfam" id="PF01704">
    <property type="entry name" value="UDPGP"/>
    <property type="match status" value="1"/>
</dbReference>
<dbReference type="PIRSF" id="PIRSF000806">
    <property type="entry name" value="UDPGP"/>
    <property type="match status" value="1"/>
</dbReference>
<dbReference type="SUPFAM" id="SSF53448">
    <property type="entry name" value="Nucleotide-diphospho-sugar transferases"/>
    <property type="match status" value="1"/>
</dbReference>
<evidence type="ECO:0000250" key="1"/>
<evidence type="ECO:0000250" key="2">
    <source>
        <dbReference type="UniProtKB" id="Q16851"/>
    </source>
</evidence>
<evidence type="ECO:0000250" key="3">
    <source>
        <dbReference type="UniProtKB" id="Q9M9P3"/>
    </source>
</evidence>
<evidence type="ECO:0000269" key="4">
    <source>
    </source>
</evidence>
<evidence type="ECO:0000269" key="5">
    <source>
    </source>
</evidence>
<evidence type="ECO:0000269" key="6">
    <source>
    </source>
</evidence>
<evidence type="ECO:0000303" key="7">
    <source>
    </source>
</evidence>
<evidence type="ECO:0000303" key="8">
    <source>
    </source>
</evidence>
<evidence type="ECO:0000305" key="9"/>
<keyword id="KW-0007">Acetylation</keyword>
<keyword id="KW-0025">Alternative splicing</keyword>
<keyword id="KW-0963">Cytoplasm</keyword>
<keyword id="KW-0548">Nucleotidyltransferase</keyword>
<keyword id="KW-1185">Reference proteome</keyword>
<keyword id="KW-0808">Transferase</keyword>
<name>UGPA1_ARATH</name>
<gene>
    <name evidence="7" type="primary">UGP1</name>
    <name type="ordered locus">At5g17310</name>
    <name type="ORF">MKP11.16</name>
</gene>
<reference key="1">
    <citation type="journal article" date="1997" name="DNA Res.">
        <title>Structural analysis of Arabidopsis thaliana chromosome 5. I. Sequence features of the 1.6 Mb regions covered by twenty physically assigned P1 clones.</title>
        <authorList>
            <person name="Sato S."/>
            <person name="Kotani H."/>
            <person name="Nakamura Y."/>
            <person name="Kaneko T."/>
            <person name="Asamizu E."/>
            <person name="Fukami M."/>
            <person name="Miyajima N."/>
            <person name="Tabata S."/>
        </authorList>
    </citation>
    <scope>NUCLEOTIDE SEQUENCE [LARGE SCALE GENOMIC DNA]</scope>
    <source>
        <strain>cv. Columbia</strain>
    </source>
</reference>
<reference key="2">
    <citation type="journal article" date="2017" name="Plant J.">
        <title>Araport11: a complete reannotation of the Arabidopsis thaliana reference genome.</title>
        <authorList>
            <person name="Cheng C.Y."/>
            <person name="Krishnakumar V."/>
            <person name="Chan A.P."/>
            <person name="Thibaud-Nissen F."/>
            <person name="Schobel S."/>
            <person name="Town C.D."/>
        </authorList>
    </citation>
    <scope>GENOME REANNOTATION</scope>
    <source>
        <strain>cv. Columbia</strain>
    </source>
</reference>
<reference key="3">
    <citation type="journal article" date="2003" name="Science">
        <title>Empirical analysis of transcriptional activity in the Arabidopsis genome.</title>
        <authorList>
            <person name="Yamada K."/>
            <person name="Lim J."/>
            <person name="Dale J.M."/>
            <person name="Chen H."/>
            <person name="Shinn P."/>
            <person name="Palm C.J."/>
            <person name="Southwick A.M."/>
            <person name="Wu H.C."/>
            <person name="Kim C.J."/>
            <person name="Nguyen M."/>
            <person name="Pham P.K."/>
            <person name="Cheuk R.F."/>
            <person name="Karlin-Newmann G."/>
            <person name="Liu S.X."/>
            <person name="Lam B."/>
            <person name="Sakano H."/>
            <person name="Wu T."/>
            <person name="Yu G."/>
            <person name="Miranda M."/>
            <person name="Quach H.L."/>
            <person name="Tripp M."/>
            <person name="Chang C.H."/>
            <person name="Lee J.M."/>
            <person name="Toriumi M.J."/>
            <person name="Chan M.M."/>
            <person name="Tang C.C."/>
            <person name="Onodera C.S."/>
            <person name="Deng J.M."/>
            <person name="Akiyama K."/>
            <person name="Ansari Y."/>
            <person name="Arakawa T."/>
            <person name="Banh J."/>
            <person name="Banno F."/>
            <person name="Bowser L."/>
            <person name="Brooks S.Y."/>
            <person name="Carninci P."/>
            <person name="Chao Q."/>
            <person name="Choy N."/>
            <person name="Enju A."/>
            <person name="Goldsmith A.D."/>
            <person name="Gurjal M."/>
            <person name="Hansen N.F."/>
            <person name="Hayashizaki Y."/>
            <person name="Johnson-Hopson C."/>
            <person name="Hsuan V.W."/>
            <person name="Iida K."/>
            <person name="Karnes M."/>
            <person name="Khan S."/>
            <person name="Koesema E."/>
            <person name="Ishida J."/>
            <person name="Jiang P.X."/>
            <person name="Jones T."/>
            <person name="Kawai J."/>
            <person name="Kamiya A."/>
            <person name="Meyers C."/>
            <person name="Nakajima M."/>
            <person name="Narusaka M."/>
            <person name="Seki M."/>
            <person name="Sakurai T."/>
            <person name="Satou M."/>
            <person name="Tamse R."/>
            <person name="Vaysberg M."/>
            <person name="Wallender E.K."/>
            <person name="Wong C."/>
            <person name="Yamamura Y."/>
            <person name="Yuan S."/>
            <person name="Shinozaki K."/>
            <person name="Davis R.W."/>
            <person name="Theologis A."/>
            <person name="Ecker J.R."/>
        </authorList>
    </citation>
    <scope>NUCLEOTIDE SEQUENCE [LARGE SCALE MRNA]</scope>
    <source>
        <strain>cv. Columbia</strain>
    </source>
</reference>
<reference key="4">
    <citation type="journal article" date="2009" name="Plant Cell Physiol.">
        <title>UDP-glucose pyrophosphorylase is not rate limiting, but is essential in Arabidopsis.</title>
        <authorList>
            <person name="Meng M."/>
            <person name="Geisler M."/>
            <person name="Johansson H."/>
            <person name="Harholt J."/>
            <person name="Scheller H.V."/>
            <person name="Mellerowicz E.J."/>
            <person name="Kleczkowski L.A."/>
        </authorList>
    </citation>
    <scope>FUNCTION</scope>
    <scope>TISSUE SPECIFICITY</scope>
    <scope>INDUCTION BY SUCROSE</scope>
    <scope>DISRUPTION PHENOTYPE</scope>
</reference>
<reference key="5">
    <citation type="journal article" date="2010" name="Plant Cell Physiol.">
        <title>UDP-glucose pyrophosphorylase is rate limiting in vegetative and reproductive phases in Arabidopsis thaliana.</title>
        <authorList>
            <person name="Park J.I."/>
            <person name="Ishimizu T."/>
            <person name="Suwabe K."/>
            <person name="Sudo K."/>
            <person name="Masuko H."/>
            <person name="Hakozaki H."/>
            <person name="Nou I.S."/>
            <person name="Suzuki G."/>
            <person name="Watanabe M."/>
        </authorList>
    </citation>
    <scope>FUNCTION</scope>
    <scope>DISRUPTION PHENOTYPE</scope>
</reference>
<reference key="6">
    <citation type="journal article" date="2013" name="J. Proteome Res.">
        <title>UDP-glucose pyrophosphorylase is a novel plant cell death regulator.</title>
        <authorList>
            <person name="Chivasa S."/>
            <person name="Tome D.F."/>
            <person name="Slabas A.R."/>
        </authorList>
    </citation>
    <scope>FUNCTION</scope>
</reference>
<organism>
    <name type="scientific">Arabidopsis thaliana</name>
    <name type="common">Mouse-ear cress</name>
    <dbReference type="NCBI Taxonomy" id="3702"/>
    <lineage>
        <taxon>Eukaryota</taxon>
        <taxon>Viridiplantae</taxon>
        <taxon>Streptophyta</taxon>
        <taxon>Embryophyta</taxon>
        <taxon>Tracheophyta</taxon>
        <taxon>Spermatophyta</taxon>
        <taxon>Magnoliopsida</taxon>
        <taxon>eudicotyledons</taxon>
        <taxon>Gunneridae</taxon>
        <taxon>Pentapetalae</taxon>
        <taxon>rosids</taxon>
        <taxon>malvids</taxon>
        <taxon>Brassicales</taxon>
        <taxon>Brassicaceae</taxon>
        <taxon>Camelineae</taxon>
        <taxon>Arabidopsis</taxon>
    </lineage>
</organism>